<protein>
    <recommendedName>
        <fullName>62 kDa cell wall protein</fullName>
    </recommendedName>
</protein>
<organism>
    <name type="scientific">Solanum lycopersicum</name>
    <name type="common">Tomato</name>
    <name type="synonym">Lycopersicon esculentum</name>
    <dbReference type="NCBI Taxonomy" id="4081"/>
    <lineage>
        <taxon>Eukaryota</taxon>
        <taxon>Viridiplantae</taxon>
        <taxon>Streptophyta</taxon>
        <taxon>Embryophyta</taxon>
        <taxon>Tracheophyta</taxon>
        <taxon>Spermatophyta</taxon>
        <taxon>Magnoliopsida</taxon>
        <taxon>eudicotyledons</taxon>
        <taxon>Gunneridae</taxon>
        <taxon>Pentapetalae</taxon>
        <taxon>asterids</taxon>
        <taxon>lamiids</taxon>
        <taxon>Solanales</taxon>
        <taxon>Solanaceae</taxon>
        <taxon>Solanoideae</taxon>
        <taxon>Solaneae</taxon>
        <taxon>Solanum</taxon>
        <taxon>Solanum subgen. Lycopersicon</taxon>
    </lineage>
</organism>
<feature type="chain" id="PRO_0000079645" description="62 kDa cell wall protein">
    <location>
        <begin position="1"/>
        <end position="9" status="greater than"/>
    </location>
</feature>
<feature type="non-terminal residue" evidence="2">
    <location>
        <position position="9"/>
    </location>
</feature>
<reference evidence="3" key="1">
    <citation type="journal article" date="1997" name="J. Biol. Chem.">
        <title>Differential extraction and protein sequencing reveals major differences in patterns of primary cell wall proteins from plants.</title>
        <authorList>
            <person name="Robertson D."/>
            <person name="Mitchell G.P."/>
            <person name="Gilroy J.S."/>
            <person name="Gerrish C."/>
            <person name="Bolwell G.P."/>
            <person name="Slabas A.R."/>
        </authorList>
    </citation>
    <scope>PROTEIN SEQUENCE</scope>
    <scope>SUBCELLULAR LOCATION</scope>
</reference>
<evidence type="ECO:0000269" key="1">
    <source>
    </source>
</evidence>
<evidence type="ECO:0000303" key="2">
    <source>
    </source>
</evidence>
<evidence type="ECO:0000305" key="3"/>
<keyword id="KW-0134">Cell wall</keyword>
<keyword id="KW-0903">Direct protein sequencing</keyword>
<keyword id="KW-1185">Reference proteome</keyword>
<keyword id="KW-0964">Secreted</keyword>
<comment type="subcellular location">
    <subcellularLocation>
        <location evidence="1">Secreted</location>
        <location evidence="1">Cell wall</location>
    </subcellularLocation>
</comment>
<sequence length="9" mass="958">EVPLDDTGL</sequence>
<dbReference type="InParanoid" id="P80804"/>
<dbReference type="Proteomes" id="UP000004994">
    <property type="component" value="Unplaced"/>
</dbReference>
<dbReference type="GO" id="GO:0005576">
    <property type="term" value="C:extracellular region"/>
    <property type="evidence" value="ECO:0007669"/>
    <property type="project" value="UniProtKB-KW"/>
</dbReference>
<accession>P80804</accession>
<name>CWP07_SOLLC</name>
<proteinExistence type="evidence at protein level"/>